<accession>A9QZW5</accession>
<gene>
    <name evidence="1" type="primary">purM</name>
    <name type="ordered locus">YpAngola_A3120</name>
</gene>
<sequence>MTNKTSLSYKDAGVDIDAGNDLVDRIKGVVKQTRRPEVMGGLGGFGALCALPQKYREPILVSGTDGVGTKLRLAMDLKRHDTIGIDLVAMCVNDLVVQGAEPLFFLDYFATGKLDVDTAASVITGIAEGCKQSGCALVGGETAEMPGMYHGDDYDVAGFCVGVVEKSEIIDGSKVTPGDVLVALGASGPHSNGYSLVRKILDVSNTNPEQTSLEGKSLADHLLEPTKIYVKSILSLIEQLDIHAIAHLTGGGFWENIPRVLPQGMQAVIDEASWQWPAVFSWLQQAGNVSRHEMYRTFNCGVGMVVALPAELADKAVELLTASGEKAWKIGVIAAATEGAEQVIINP</sequence>
<organism>
    <name type="scientific">Yersinia pestis bv. Antiqua (strain Angola)</name>
    <dbReference type="NCBI Taxonomy" id="349746"/>
    <lineage>
        <taxon>Bacteria</taxon>
        <taxon>Pseudomonadati</taxon>
        <taxon>Pseudomonadota</taxon>
        <taxon>Gammaproteobacteria</taxon>
        <taxon>Enterobacterales</taxon>
        <taxon>Yersiniaceae</taxon>
        <taxon>Yersinia</taxon>
    </lineage>
</organism>
<proteinExistence type="inferred from homology"/>
<protein>
    <recommendedName>
        <fullName evidence="1">Phosphoribosylformylglycinamidine cyclo-ligase</fullName>
        <ecNumber evidence="1">6.3.3.1</ecNumber>
    </recommendedName>
    <alternativeName>
        <fullName evidence="1">AIR synthase</fullName>
    </alternativeName>
    <alternativeName>
        <fullName evidence="1">AIRS</fullName>
    </alternativeName>
    <alternativeName>
        <fullName evidence="1">Phosphoribosyl-aminoimidazole synthetase</fullName>
    </alternativeName>
</protein>
<name>PUR5_YERPG</name>
<evidence type="ECO:0000255" key="1">
    <source>
        <dbReference type="HAMAP-Rule" id="MF_00741"/>
    </source>
</evidence>
<feature type="chain" id="PRO_1000193058" description="Phosphoribosylformylglycinamidine cyclo-ligase">
    <location>
        <begin position="1"/>
        <end position="347"/>
    </location>
</feature>
<comment type="catalytic activity">
    <reaction evidence="1">
        <text>2-formamido-N(1)-(5-O-phospho-beta-D-ribosyl)acetamidine + ATP = 5-amino-1-(5-phospho-beta-D-ribosyl)imidazole + ADP + phosphate + H(+)</text>
        <dbReference type="Rhea" id="RHEA:23032"/>
        <dbReference type="ChEBI" id="CHEBI:15378"/>
        <dbReference type="ChEBI" id="CHEBI:30616"/>
        <dbReference type="ChEBI" id="CHEBI:43474"/>
        <dbReference type="ChEBI" id="CHEBI:137981"/>
        <dbReference type="ChEBI" id="CHEBI:147287"/>
        <dbReference type="ChEBI" id="CHEBI:456216"/>
        <dbReference type="EC" id="6.3.3.1"/>
    </reaction>
</comment>
<comment type="pathway">
    <text evidence="1">Purine metabolism; IMP biosynthesis via de novo pathway; 5-amino-1-(5-phospho-D-ribosyl)imidazole from N(2)-formyl-N(1)-(5-phospho-D-ribosyl)glycinamide: step 2/2.</text>
</comment>
<comment type="subcellular location">
    <subcellularLocation>
        <location evidence="1">Cytoplasm</location>
    </subcellularLocation>
</comment>
<comment type="similarity">
    <text evidence="1">Belongs to the AIR synthase family.</text>
</comment>
<reference key="1">
    <citation type="journal article" date="2010" name="J. Bacteriol.">
        <title>Genome sequence of the deep-rooted Yersinia pestis strain Angola reveals new insights into the evolution and pangenome of the plague bacterium.</title>
        <authorList>
            <person name="Eppinger M."/>
            <person name="Worsham P.L."/>
            <person name="Nikolich M.P."/>
            <person name="Riley D.R."/>
            <person name="Sebastian Y."/>
            <person name="Mou S."/>
            <person name="Achtman M."/>
            <person name="Lindler L.E."/>
            <person name="Ravel J."/>
        </authorList>
    </citation>
    <scope>NUCLEOTIDE SEQUENCE [LARGE SCALE GENOMIC DNA]</scope>
    <source>
        <strain>Angola</strain>
    </source>
</reference>
<keyword id="KW-0067">ATP-binding</keyword>
<keyword id="KW-0963">Cytoplasm</keyword>
<keyword id="KW-0436">Ligase</keyword>
<keyword id="KW-0547">Nucleotide-binding</keyword>
<keyword id="KW-0658">Purine biosynthesis</keyword>
<dbReference type="EC" id="6.3.3.1" evidence="1"/>
<dbReference type="EMBL" id="CP000901">
    <property type="protein sequence ID" value="ABX86368.1"/>
    <property type="molecule type" value="Genomic_DNA"/>
</dbReference>
<dbReference type="RefSeq" id="WP_002209777.1">
    <property type="nucleotide sequence ID" value="NZ_CP009935.1"/>
</dbReference>
<dbReference type="SMR" id="A9QZW5"/>
<dbReference type="GeneID" id="57975788"/>
<dbReference type="KEGG" id="ypg:YpAngola_A3120"/>
<dbReference type="PATRIC" id="fig|349746.12.peg.4179"/>
<dbReference type="UniPathway" id="UPA00074">
    <property type="reaction ID" value="UER00129"/>
</dbReference>
<dbReference type="GO" id="GO:0005829">
    <property type="term" value="C:cytosol"/>
    <property type="evidence" value="ECO:0007669"/>
    <property type="project" value="TreeGrafter"/>
</dbReference>
<dbReference type="GO" id="GO:0005524">
    <property type="term" value="F:ATP binding"/>
    <property type="evidence" value="ECO:0007669"/>
    <property type="project" value="UniProtKB-KW"/>
</dbReference>
<dbReference type="GO" id="GO:0004637">
    <property type="term" value="F:phosphoribosylamine-glycine ligase activity"/>
    <property type="evidence" value="ECO:0007669"/>
    <property type="project" value="TreeGrafter"/>
</dbReference>
<dbReference type="GO" id="GO:0004641">
    <property type="term" value="F:phosphoribosylformylglycinamidine cyclo-ligase activity"/>
    <property type="evidence" value="ECO:0007669"/>
    <property type="project" value="UniProtKB-UniRule"/>
</dbReference>
<dbReference type="GO" id="GO:0006189">
    <property type="term" value="P:'de novo' IMP biosynthetic process"/>
    <property type="evidence" value="ECO:0007669"/>
    <property type="project" value="UniProtKB-UniRule"/>
</dbReference>
<dbReference type="GO" id="GO:0046084">
    <property type="term" value="P:adenine biosynthetic process"/>
    <property type="evidence" value="ECO:0007669"/>
    <property type="project" value="TreeGrafter"/>
</dbReference>
<dbReference type="CDD" id="cd02196">
    <property type="entry name" value="PurM"/>
    <property type="match status" value="1"/>
</dbReference>
<dbReference type="FunFam" id="3.30.1330.10:FF:000001">
    <property type="entry name" value="Phosphoribosylformylglycinamidine cyclo-ligase"/>
    <property type="match status" value="1"/>
</dbReference>
<dbReference type="FunFam" id="3.90.650.10:FF:000001">
    <property type="entry name" value="Phosphoribosylformylglycinamidine cyclo-ligase"/>
    <property type="match status" value="1"/>
</dbReference>
<dbReference type="Gene3D" id="3.90.650.10">
    <property type="entry name" value="PurM-like C-terminal domain"/>
    <property type="match status" value="1"/>
</dbReference>
<dbReference type="Gene3D" id="3.30.1330.10">
    <property type="entry name" value="PurM-like, N-terminal domain"/>
    <property type="match status" value="1"/>
</dbReference>
<dbReference type="HAMAP" id="MF_00741">
    <property type="entry name" value="AIRS"/>
    <property type="match status" value="1"/>
</dbReference>
<dbReference type="InterPro" id="IPR010918">
    <property type="entry name" value="PurM-like_C_dom"/>
</dbReference>
<dbReference type="InterPro" id="IPR036676">
    <property type="entry name" value="PurM-like_C_sf"/>
</dbReference>
<dbReference type="InterPro" id="IPR016188">
    <property type="entry name" value="PurM-like_N"/>
</dbReference>
<dbReference type="InterPro" id="IPR036921">
    <property type="entry name" value="PurM-like_N_sf"/>
</dbReference>
<dbReference type="InterPro" id="IPR004733">
    <property type="entry name" value="PurM_cligase"/>
</dbReference>
<dbReference type="NCBIfam" id="TIGR00878">
    <property type="entry name" value="purM"/>
    <property type="match status" value="1"/>
</dbReference>
<dbReference type="PANTHER" id="PTHR10520:SF12">
    <property type="entry name" value="TRIFUNCTIONAL PURINE BIOSYNTHETIC PROTEIN ADENOSINE-3"/>
    <property type="match status" value="1"/>
</dbReference>
<dbReference type="PANTHER" id="PTHR10520">
    <property type="entry name" value="TRIFUNCTIONAL PURINE BIOSYNTHETIC PROTEIN ADENOSINE-3-RELATED"/>
    <property type="match status" value="1"/>
</dbReference>
<dbReference type="Pfam" id="PF00586">
    <property type="entry name" value="AIRS"/>
    <property type="match status" value="1"/>
</dbReference>
<dbReference type="Pfam" id="PF02769">
    <property type="entry name" value="AIRS_C"/>
    <property type="match status" value="1"/>
</dbReference>
<dbReference type="SUPFAM" id="SSF56042">
    <property type="entry name" value="PurM C-terminal domain-like"/>
    <property type="match status" value="1"/>
</dbReference>
<dbReference type="SUPFAM" id="SSF55326">
    <property type="entry name" value="PurM N-terminal domain-like"/>
    <property type="match status" value="1"/>
</dbReference>